<accession>Q8KBF6</accession>
<evidence type="ECO:0000255" key="1">
    <source>
        <dbReference type="HAMAP-Rule" id="MF_00518"/>
    </source>
</evidence>
<protein>
    <recommendedName>
        <fullName evidence="1">D-aminoacyl-tRNA deacylase</fullName>
        <shortName evidence="1">DTD</shortName>
        <ecNumber evidence="1">3.1.1.96</ecNumber>
    </recommendedName>
    <alternativeName>
        <fullName evidence="1">Gly-tRNA(Ala) deacylase</fullName>
    </alternativeName>
</protein>
<gene>
    <name evidence="1" type="primary">dtd</name>
    <name type="ordered locus">CT1831</name>
</gene>
<name>DTD_CHLTE</name>
<reference key="1">
    <citation type="journal article" date="2002" name="Proc. Natl. Acad. Sci. U.S.A.">
        <title>The complete genome sequence of Chlorobium tepidum TLS, a photosynthetic, anaerobic, green-sulfur bacterium.</title>
        <authorList>
            <person name="Eisen J.A."/>
            <person name="Nelson K.E."/>
            <person name="Paulsen I.T."/>
            <person name="Heidelberg J.F."/>
            <person name="Wu M."/>
            <person name="Dodson R.J."/>
            <person name="DeBoy R.T."/>
            <person name="Gwinn M.L."/>
            <person name="Nelson W.C."/>
            <person name="Haft D.H."/>
            <person name="Hickey E.K."/>
            <person name="Peterson J.D."/>
            <person name="Durkin A.S."/>
            <person name="Kolonay J.F."/>
            <person name="Yang F."/>
            <person name="Holt I.E."/>
            <person name="Umayam L.A."/>
            <person name="Mason T.M."/>
            <person name="Brenner M."/>
            <person name="Shea T.P."/>
            <person name="Parksey D.S."/>
            <person name="Nierman W.C."/>
            <person name="Feldblyum T.V."/>
            <person name="Hansen C.L."/>
            <person name="Craven M.B."/>
            <person name="Radune D."/>
            <person name="Vamathevan J.J."/>
            <person name="Khouri H.M."/>
            <person name="White O."/>
            <person name="Gruber T.M."/>
            <person name="Ketchum K.A."/>
            <person name="Venter J.C."/>
            <person name="Tettelin H."/>
            <person name="Bryant D.A."/>
            <person name="Fraser C.M."/>
        </authorList>
    </citation>
    <scope>NUCLEOTIDE SEQUENCE [LARGE SCALE GENOMIC DNA]</scope>
    <source>
        <strain>ATCC 49652 / DSM 12025 / NBRC 103806 / TLS</strain>
    </source>
</reference>
<sequence>MRTVVQQVREASVSIGGELHSSIGTGLLVLAGISRDDTADDLAWMSRKIPNLRIFEDEKGKMNRSLKDIGGALLVVSQFTLYADASRGNRPGFSESAPPELARVLFDRFVESIRHEAGCPVETGVFGADMQVSLVNDGPVTIILESPKKP</sequence>
<organism>
    <name type="scientific">Chlorobaculum tepidum (strain ATCC 49652 / DSM 12025 / NBRC 103806 / TLS)</name>
    <name type="common">Chlorobium tepidum</name>
    <dbReference type="NCBI Taxonomy" id="194439"/>
    <lineage>
        <taxon>Bacteria</taxon>
        <taxon>Pseudomonadati</taxon>
        <taxon>Chlorobiota</taxon>
        <taxon>Chlorobiia</taxon>
        <taxon>Chlorobiales</taxon>
        <taxon>Chlorobiaceae</taxon>
        <taxon>Chlorobaculum</taxon>
    </lineage>
</organism>
<comment type="function">
    <text evidence="1">An aminoacyl-tRNA editing enzyme that deacylates mischarged D-aminoacyl-tRNAs. Also deacylates mischarged glycyl-tRNA(Ala), protecting cells against glycine mischarging by AlaRS. Acts via tRNA-based rather than protein-based catalysis; rejects L-amino acids rather than detecting D-amino acids in the active site. By recycling D-aminoacyl-tRNA to D-amino acids and free tRNA molecules, this enzyme counteracts the toxicity associated with the formation of D-aminoacyl-tRNA entities in vivo and helps enforce protein L-homochirality.</text>
</comment>
<comment type="catalytic activity">
    <reaction evidence="1">
        <text>glycyl-tRNA(Ala) + H2O = tRNA(Ala) + glycine + H(+)</text>
        <dbReference type="Rhea" id="RHEA:53744"/>
        <dbReference type="Rhea" id="RHEA-COMP:9657"/>
        <dbReference type="Rhea" id="RHEA-COMP:13640"/>
        <dbReference type="ChEBI" id="CHEBI:15377"/>
        <dbReference type="ChEBI" id="CHEBI:15378"/>
        <dbReference type="ChEBI" id="CHEBI:57305"/>
        <dbReference type="ChEBI" id="CHEBI:78442"/>
        <dbReference type="ChEBI" id="CHEBI:78522"/>
        <dbReference type="EC" id="3.1.1.96"/>
    </reaction>
</comment>
<comment type="catalytic activity">
    <reaction evidence="1">
        <text>a D-aminoacyl-tRNA + H2O = a tRNA + a D-alpha-amino acid + H(+)</text>
        <dbReference type="Rhea" id="RHEA:13953"/>
        <dbReference type="Rhea" id="RHEA-COMP:10123"/>
        <dbReference type="Rhea" id="RHEA-COMP:10124"/>
        <dbReference type="ChEBI" id="CHEBI:15377"/>
        <dbReference type="ChEBI" id="CHEBI:15378"/>
        <dbReference type="ChEBI" id="CHEBI:59871"/>
        <dbReference type="ChEBI" id="CHEBI:78442"/>
        <dbReference type="ChEBI" id="CHEBI:79333"/>
        <dbReference type="EC" id="3.1.1.96"/>
    </reaction>
</comment>
<comment type="subunit">
    <text evidence="1">Homodimer.</text>
</comment>
<comment type="subcellular location">
    <subcellularLocation>
        <location evidence="1">Cytoplasm</location>
    </subcellularLocation>
</comment>
<comment type="domain">
    <text evidence="1">A Gly-cisPro motif from one monomer fits into the active site of the other monomer to allow specific chiral rejection of L-amino acids.</text>
</comment>
<comment type="similarity">
    <text evidence="1">Belongs to the DTD family.</text>
</comment>
<feature type="chain" id="PRO_0000164528" description="D-aminoacyl-tRNA deacylase">
    <location>
        <begin position="1"/>
        <end position="150"/>
    </location>
</feature>
<feature type="short sequence motif" description="Gly-cisPro motif, important for rejection of L-amino acids" evidence="1">
    <location>
        <begin position="138"/>
        <end position="139"/>
    </location>
</feature>
<proteinExistence type="inferred from homology"/>
<keyword id="KW-0963">Cytoplasm</keyword>
<keyword id="KW-0378">Hydrolase</keyword>
<keyword id="KW-1185">Reference proteome</keyword>
<keyword id="KW-0694">RNA-binding</keyword>
<keyword id="KW-0820">tRNA-binding</keyword>
<dbReference type="EC" id="3.1.1.96" evidence="1"/>
<dbReference type="EMBL" id="AE006470">
    <property type="protein sequence ID" value="AAM73052.1"/>
    <property type="molecule type" value="Genomic_DNA"/>
</dbReference>
<dbReference type="RefSeq" id="NP_662710.1">
    <property type="nucleotide sequence ID" value="NC_002932.3"/>
</dbReference>
<dbReference type="RefSeq" id="WP_010933491.1">
    <property type="nucleotide sequence ID" value="NC_002932.3"/>
</dbReference>
<dbReference type="SMR" id="Q8KBF6"/>
<dbReference type="STRING" id="194439.CT1831"/>
<dbReference type="EnsemblBacteria" id="AAM73052">
    <property type="protein sequence ID" value="AAM73052"/>
    <property type="gene ID" value="CT1831"/>
</dbReference>
<dbReference type="KEGG" id="cte:CT1831"/>
<dbReference type="PATRIC" id="fig|194439.7.peg.1663"/>
<dbReference type="eggNOG" id="COG1490">
    <property type="taxonomic scope" value="Bacteria"/>
</dbReference>
<dbReference type="HOGENOM" id="CLU_076901_1_0_10"/>
<dbReference type="OrthoDB" id="9801395at2"/>
<dbReference type="Proteomes" id="UP000001007">
    <property type="component" value="Chromosome"/>
</dbReference>
<dbReference type="GO" id="GO:0005737">
    <property type="term" value="C:cytoplasm"/>
    <property type="evidence" value="ECO:0007669"/>
    <property type="project" value="UniProtKB-SubCell"/>
</dbReference>
<dbReference type="GO" id="GO:0051500">
    <property type="term" value="F:D-tyrosyl-tRNA(Tyr) deacylase activity"/>
    <property type="evidence" value="ECO:0007669"/>
    <property type="project" value="TreeGrafter"/>
</dbReference>
<dbReference type="GO" id="GO:0106026">
    <property type="term" value="F:Gly-tRNA(Ala) deacylase activity"/>
    <property type="evidence" value="ECO:0007669"/>
    <property type="project" value="UniProtKB-UniRule"/>
</dbReference>
<dbReference type="GO" id="GO:0043908">
    <property type="term" value="F:Ser(Gly)-tRNA(Ala) hydrolase activity"/>
    <property type="evidence" value="ECO:0007669"/>
    <property type="project" value="UniProtKB-UniRule"/>
</dbReference>
<dbReference type="GO" id="GO:0000049">
    <property type="term" value="F:tRNA binding"/>
    <property type="evidence" value="ECO:0007669"/>
    <property type="project" value="UniProtKB-UniRule"/>
</dbReference>
<dbReference type="GO" id="GO:0019478">
    <property type="term" value="P:D-amino acid catabolic process"/>
    <property type="evidence" value="ECO:0007669"/>
    <property type="project" value="UniProtKB-UniRule"/>
</dbReference>
<dbReference type="CDD" id="cd00563">
    <property type="entry name" value="Dtyr_deacylase"/>
    <property type="match status" value="1"/>
</dbReference>
<dbReference type="FunFam" id="3.50.80.10:FF:000001">
    <property type="entry name" value="D-aminoacyl-tRNA deacylase"/>
    <property type="match status" value="1"/>
</dbReference>
<dbReference type="Gene3D" id="3.50.80.10">
    <property type="entry name" value="D-tyrosyl-tRNA(Tyr) deacylase"/>
    <property type="match status" value="1"/>
</dbReference>
<dbReference type="HAMAP" id="MF_00518">
    <property type="entry name" value="Deacylase_Dtd"/>
    <property type="match status" value="1"/>
</dbReference>
<dbReference type="InterPro" id="IPR003732">
    <property type="entry name" value="Daa-tRNA_deacyls_DTD"/>
</dbReference>
<dbReference type="InterPro" id="IPR023509">
    <property type="entry name" value="DTD-like_sf"/>
</dbReference>
<dbReference type="NCBIfam" id="TIGR00256">
    <property type="entry name" value="D-aminoacyl-tRNA deacylase"/>
    <property type="match status" value="1"/>
</dbReference>
<dbReference type="PANTHER" id="PTHR10472:SF5">
    <property type="entry name" value="D-AMINOACYL-TRNA DEACYLASE 1"/>
    <property type="match status" value="1"/>
</dbReference>
<dbReference type="PANTHER" id="PTHR10472">
    <property type="entry name" value="D-TYROSYL-TRNA TYR DEACYLASE"/>
    <property type="match status" value="1"/>
</dbReference>
<dbReference type="Pfam" id="PF02580">
    <property type="entry name" value="Tyr_Deacylase"/>
    <property type="match status" value="1"/>
</dbReference>
<dbReference type="SUPFAM" id="SSF69500">
    <property type="entry name" value="DTD-like"/>
    <property type="match status" value="1"/>
</dbReference>